<evidence type="ECO:0000255" key="1">
    <source>
        <dbReference type="HAMAP-Rule" id="MF_01077"/>
    </source>
</evidence>
<evidence type="ECO:0000256" key="2">
    <source>
        <dbReference type="SAM" id="MobiDB-lite"/>
    </source>
</evidence>
<name>RIMP_RHOPT</name>
<gene>
    <name evidence="1" type="primary">rimP</name>
    <name type="ordered locus">Rpal_0443</name>
</gene>
<feature type="chain" id="PRO_1000136793" description="Ribosome maturation factor RimP">
    <location>
        <begin position="1"/>
        <end position="259"/>
    </location>
</feature>
<feature type="region of interest" description="Disordered" evidence="2">
    <location>
        <begin position="198"/>
        <end position="259"/>
    </location>
</feature>
<feature type="compositionally biased region" description="Basic and acidic residues" evidence="2">
    <location>
        <begin position="243"/>
        <end position="253"/>
    </location>
</feature>
<reference key="1">
    <citation type="submission" date="2008-05" db="EMBL/GenBank/DDBJ databases">
        <title>Complete sequence of Rhodopseudomonas palustris TIE-1.</title>
        <authorList>
            <consortium name="US DOE Joint Genome Institute"/>
            <person name="Lucas S."/>
            <person name="Copeland A."/>
            <person name="Lapidus A."/>
            <person name="Glavina del Rio T."/>
            <person name="Dalin E."/>
            <person name="Tice H."/>
            <person name="Pitluck S."/>
            <person name="Chain P."/>
            <person name="Malfatti S."/>
            <person name="Shin M."/>
            <person name="Vergez L."/>
            <person name="Lang D."/>
            <person name="Schmutz J."/>
            <person name="Larimer F."/>
            <person name="Land M."/>
            <person name="Hauser L."/>
            <person name="Kyrpides N."/>
            <person name="Mikhailova N."/>
            <person name="Emerson D."/>
            <person name="Newman D.K."/>
            <person name="Roden E."/>
            <person name="Richardson P."/>
        </authorList>
    </citation>
    <scope>NUCLEOTIDE SEQUENCE [LARGE SCALE GENOMIC DNA]</scope>
    <source>
        <strain>TIE-1</strain>
    </source>
</reference>
<sequence>MTEPTPAVPETDDLAEPRLVIEPGVAARFCAVAEPVLMAMGYRLVRIKVSGDAGCTVQIMAERPDGTMLIDDCEAASRALSPVLDVADPIDRAYRLEISSPGIDRPLVRRSDFARYAGHLVKIEMAVPHQGRKRYRGLLDGVEGDAVRVQREGATKDEDPLVLLPMHDIGDARLVLTDELIAESMRRGKQAERDLKQSLGLAPEPPPHAKRSDPKKSHAPKRGPKAAKAPTKPKPQNTKQHRLAADKARRGEIDTSEGD</sequence>
<organism>
    <name type="scientific">Rhodopseudomonas palustris (strain TIE-1)</name>
    <dbReference type="NCBI Taxonomy" id="395960"/>
    <lineage>
        <taxon>Bacteria</taxon>
        <taxon>Pseudomonadati</taxon>
        <taxon>Pseudomonadota</taxon>
        <taxon>Alphaproteobacteria</taxon>
        <taxon>Hyphomicrobiales</taxon>
        <taxon>Nitrobacteraceae</taxon>
        <taxon>Rhodopseudomonas</taxon>
    </lineage>
</organism>
<comment type="function">
    <text evidence="1">Required for maturation of 30S ribosomal subunits.</text>
</comment>
<comment type="subcellular location">
    <subcellularLocation>
        <location evidence="1">Cytoplasm</location>
    </subcellularLocation>
</comment>
<comment type="similarity">
    <text evidence="1">Belongs to the RimP family.</text>
</comment>
<accession>B3QAB7</accession>
<dbReference type="EMBL" id="CP001096">
    <property type="protein sequence ID" value="ACE99003.1"/>
    <property type="molecule type" value="Genomic_DNA"/>
</dbReference>
<dbReference type="RefSeq" id="WP_012494155.1">
    <property type="nucleotide sequence ID" value="NC_011004.1"/>
</dbReference>
<dbReference type="SMR" id="B3QAB7"/>
<dbReference type="KEGG" id="rpt:Rpal_0443"/>
<dbReference type="HOGENOM" id="CLU_070525_0_0_5"/>
<dbReference type="OrthoDB" id="9805006at2"/>
<dbReference type="Proteomes" id="UP000001725">
    <property type="component" value="Chromosome"/>
</dbReference>
<dbReference type="GO" id="GO:0005829">
    <property type="term" value="C:cytosol"/>
    <property type="evidence" value="ECO:0007669"/>
    <property type="project" value="TreeGrafter"/>
</dbReference>
<dbReference type="GO" id="GO:0000028">
    <property type="term" value="P:ribosomal small subunit assembly"/>
    <property type="evidence" value="ECO:0007669"/>
    <property type="project" value="TreeGrafter"/>
</dbReference>
<dbReference type="GO" id="GO:0006412">
    <property type="term" value="P:translation"/>
    <property type="evidence" value="ECO:0007669"/>
    <property type="project" value="TreeGrafter"/>
</dbReference>
<dbReference type="CDD" id="cd01734">
    <property type="entry name" value="YlxS_C"/>
    <property type="match status" value="1"/>
</dbReference>
<dbReference type="Gene3D" id="3.30.300.70">
    <property type="entry name" value="RimP-like superfamily, N-terminal"/>
    <property type="match status" value="1"/>
</dbReference>
<dbReference type="HAMAP" id="MF_01077">
    <property type="entry name" value="RimP"/>
    <property type="match status" value="1"/>
</dbReference>
<dbReference type="InterPro" id="IPR003728">
    <property type="entry name" value="Ribosome_maturation_RimP"/>
</dbReference>
<dbReference type="InterPro" id="IPR028998">
    <property type="entry name" value="RimP_C"/>
</dbReference>
<dbReference type="InterPro" id="IPR036847">
    <property type="entry name" value="RimP_C_sf"/>
</dbReference>
<dbReference type="InterPro" id="IPR028989">
    <property type="entry name" value="RimP_N"/>
</dbReference>
<dbReference type="InterPro" id="IPR035956">
    <property type="entry name" value="RimP_N_sf"/>
</dbReference>
<dbReference type="NCBIfam" id="NF000932">
    <property type="entry name" value="PRK00092.2-5"/>
    <property type="match status" value="1"/>
</dbReference>
<dbReference type="NCBIfam" id="NF000933">
    <property type="entry name" value="PRK00092.2-6"/>
    <property type="match status" value="1"/>
</dbReference>
<dbReference type="PANTHER" id="PTHR33867">
    <property type="entry name" value="RIBOSOME MATURATION FACTOR RIMP"/>
    <property type="match status" value="1"/>
</dbReference>
<dbReference type="PANTHER" id="PTHR33867:SF1">
    <property type="entry name" value="RIBOSOME MATURATION FACTOR RIMP"/>
    <property type="match status" value="1"/>
</dbReference>
<dbReference type="Pfam" id="PF17384">
    <property type="entry name" value="DUF150_C"/>
    <property type="match status" value="1"/>
</dbReference>
<dbReference type="Pfam" id="PF02576">
    <property type="entry name" value="RimP_N"/>
    <property type="match status" value="1"/>
</dbReference>
<dbReference type="SUPFAM" id="SSF74942">
    <property type="entry name" value="YhbC-like, C-terminal domain"/>
    <property type="match status" value="1"/>
</dbReference>
<dbReference type="SUPFAM" id="SSF75420">
    <property type="entry name" value="YhbC-like, N-terminal domain"/>
    <property type="match status" value="1"/>
</dbReference>
<proteinExistence type="inferred from homology"/>
<protein>
    <recommendedName>
        <fullName evidence="1">Ribosome maturation factor RimP</fullName>
    </recommendedName>
</protein>
<keyword id="KW-0963">Cytoplasm</keyword>
<keyword id="KW-0690">Ribosome biogenesis</keyword>